<protein>
    <recommendedName>
        <fullName evidence="1">Oxygen-dependent coproporphyrinogen-III oxidase</fullName>
        <shortName evidence="1">CPO</shortName>
        <shortName evidence="1">Coprogen oxidase</shortName>
        <shortName evidence="1">Coproporphyrinogenase</shortName>
        <ecNumber evidence="1">1.3.3.3</ecNumber>
    </recommendedName>
</protein>
<comment type="function">
    <text evidence="1">Involved in the heme biosynthesis. Catalyzes the aerobic oxidative decarboxylation of propionate groups of rings A and B of coproporphyrinogen-III to yield the vinyl groups in protoporphyrinogen-IX.</text>
</comment>
<comment type="catalytic activity">
    <reaction evidence="1">
        <text>coproporphyrinogen III + O2 + 2 H(+) = protoporphyrinogen IX + 2 CO2 + 2 H2O</text>
        <dbReference type="Rhea" id="RHEA:18257"/>
        <dbReference type="ChEBI" id="CHEBI:15377"/>
        <dbReference type="ChEBI" id="CHEBI:15378"/>
        <dbReference type="ChEBI" id="CHEBI:15379"/>
        <dbReference type="ChEBI" id="CHEBI:16526"/>
        <dbReference type="ChEBI" id="CHEBI:57307"/>
        <dbReference type="ChEBI" id="CHEBI:57309"/>
        <dbReference type="EC" id="1.3.3.3"/>
    </reaction>
</comment>
<comment type="cofactor">
    <cofactor evidence="1">
        <name>a divalent metal cation</name>
        <dbReference type="ChEBI" id="CHEBI:60240"/>
    </cofactor>
</comment>
<comment type="pathway">
    <text evidence="1">Porphyrin-containing compound metabolism; protoporphyrin-IX biosynthesis; protoporphyrinogen-IX from coproporphyrinogen-III (O2 route): step 1/1.</text>
</comment>
<comment type="subunit">
    <text evidence="1">Homodimer.</text>
</comment>
<comment type="subcellular location">
    <subcellularLocation>
        <location evidence="1">Cytoplasm</location>
    </subcellularLocation>
</comment>
<comment type="similarity">
    <text evidence="1">Belongs to the aerobic coproporphyrinogen-III oxidase family.</text>
</comment>
<sequence length="308" mass="35245">MKPDAHHVKQFLLRLQDDICQTLSAVDGANFVEDSWRREAGGGGRSRVLRNGGIFEQAGVNFSHVHGDAMPASATAHRPELAGRSFEAMGVSLVVHPHNPYIPTSHANVRFFIAEKPGADPVWWFGGGFDLTPYYGFEEDAVHWHRTARDLCQPFGDDVYPRYKKWCDDYFFLKHRNEQRGIGGLFFDDLNTPDFDHCFAFMQAVGNGYTEAYLPIVERRKAMVWGERERNFQLYRRGRYVEFNLVWDRGTLFGLQTGGRTESILMSMPPLVRWEYDWQPEAGSPEAALSEFIQVRDWVSLPDNSSVS</sequence>
<name>HEM6_SALPA</name>
<organism>
    <name type="scientific">Salmonella paratyphi A (strain ATCC 9150 / SARB42)</name>
    <dbReference type="NCBI Taxonomy" id="295319"/>
    <lineage>
        <taxon>Bacteria</taxon>
        <taxon>Pseudomonadati</taxon>
        <taxon>Pseudomonadota</taxon>
        <taxon>Gammaproteobacteria</taxon>
        <taxon>Enterobacterales</taxon>
        <taxon>Enterobacteriaceae</taxon>
        <taxon>Salmonella</taxon>
    </lineage>
</organism>
<reference key="1">
    <citation type="journal article" date="2004" name="Nat. Genet.">
        <title>Comparison of genome degradation in Paratyphi A and Typhi, human-restricted serovars of Salmonella enterica that cause typhoid.</title>
        <authorList>
            <person name="McClelland M."/>
            <person name="Sanderson K.E."/>
            <person name="Clifton S.W."/>
            <person name="Latreille P."/>
            <person name="Porwollik S."/>
            <person name="Sabo A."/>
            <person name="Meyer R."/>
            <person name="Bieri T."/>
            <person name="Ozersky P."/>
            <person name="McLellan M."/>
            <person name="Harkins C.R."/>
            <person name="Wang C."/>
            <person name="Nguyen C."/>
            <person name="Berghoff A."/>
            <person name="Elliott G."/>
            <person name="Kohlberg S."/>
            <person name="Strong C."/>
            <person name="Du F."/>
            <person name="Carter J."/>
            <person name="Kremizki C."/>
            <person name="Layman D."/>
            <person name="Leonard S."/>
            <person name="Sun H."/>
            <person name="Fulton L."/>
            <person name="Nash W."/>
            <person name="Miner T."/>
            <person name="Minx P."/>
            <person name="Delehaunty K."/>
            <person name="Fronick C."/>
            <person name="Magrini V."/>
            <person name="Nhan M."/>
            <person name="Warren W."/>
            <person name="Florea L."/>
            <person name="Spieth J."/>
            <person name="Wilson R.K."/>
        </authorList>
    </citation>
    <scope>NUCLEOTIDE SEQUENCE [LARGE SCALE GENOMIC DNA]</scope>
    <source>
        <strain>ATCC 9150 / SARB42</strain>
    </source>
</reference>
<gene>
    <name evidence="1" type="primary">hemF</name>
    <name type="ordered locus">SPA0415</name>
</gene>
<feature type="chain" id="PRO_0000109917" description="Oxygen-dependent coproporphyrinogen-III oxidase">
    <location>
        <begin position="1"/>
        <end position="308"/>
    </location>
</feature>
<feature type="region of interest" description="Important for dimerization" evidence="1">
    <location>
        <begin position="240"/>
        <end position="275"/>
    </location>
</feature>
<feature type="active site" description="Proton donor" evidence="1">
    <location>
        <position position="106"/>
    </location>
</feature>
<feature type="binding site" evidence="1">
    <location>
        <position position="92"/>
    </location>
    <ligand>
        <name>substrate</name>
    </ligand>
</feature>
<feature type="binding site" evidence="1">
    <location>
        <position position="96"/>
    </location>
    <ligand>
        <name>a divalent metal cation</name>
        <dbReference type="ChEBI" id="CHEBI:60240"/>
    </ligand>
</feature>
<feature type="binding site" evidence="1">
    <location>
        <position position="106"/>
    </location>
    <ligand>
        <name>a divalent metal cation</name>
        <dbReference type="ChEBI" id="CHEBI:60240"/>
    </ligand>
</feature>
<feature type="binding site" evidence="1">
    <location>
        <begin position="108"/>
        <end position="110"/>
    </location>
    <ligand>
        <name>substrate</name>
    </ligand>
</feature>
<feature type="binding site" evidence="1">
    <location>
        <position position="145"/>
    </location>
    <ligand>
        <name>a divalent metal cation</name>
        <dbReference type="ChEBI" id="CHEBI:60240"/>
    </ligand>
</feature>
<feature type="binding site" evidence="1">
    <location>
        <position position="175"/>
    </location>
    <ligand>
        <name>a divalent metal cation</name>
        <dbReference type="ChEBI" id="CHEBI:60240"/>
    </ligand>
</feature>
<feature type="binding site" evidence="1">
    <location>
        <begin position="258"/>
        <end position="260"/>
    </location>
    <ligand>
        <name>substrate</name>
    </ligand>
</feature>
<feature type="site" description="Important for dimerization" evidence="1">
    <location>
        <position position="175"/>
    </location>
</feature>
<proteinExistence type="inferred from homology"/>
<evidence type="ECO:0000255" key="1">
    <source>
        <dbReference type="HAMAP-Rule" id="MF_00333"/>
    </source>
</evidence>
<accession>Q5PI28</accession>
<dbReference type="EC" id="1.3.3.3" evidence="1"/>
<dbReference type="EMBL" id="CP000026">
    <property type="protein sequence ID" value="AAV76426.1"/>
    <property type="molecule type" value="Genomic_DNA"/>
</dbReference>
<dbReference type="RefSeq" id="WP_000801341.1">
    <property type="nucleotide sequence ID" value="NC_006511.1"/>
</dbReference>
<dbReference type="SMR" id="Q5PI28"/>
<dbReference type="KEGG" id="spt:SPA0415"/>
<dbReference type="HOGENOM" id="CLU_026169_0_1_6"/>
<dbReference type="UniPathway" id="UPA00251">
    <property type="reaction ID" value="UER00322"/>
</dbReference>
<dbReference type="Proteomes" id="UP000008185">
    <property type="component" value="Chromosome"/>
</dbReference>
<dbReference type="GO" id="GO:0005737">
    <property type="term" value="C:cytoplasm"/>
    <property type="evidence" value="ECO:0007669"/>
    <property type="project" value="UniProtKB-SubCell"/>
</dbReference>
<dbReference type="GO" id="GO:0004109">
    <property type="term" value="F:coproporphyrinogen oxidase activity"/>
    <property type="evidence" value="ECO:0007669"/>
    <property type="project" value="UniProtKB-UniRule"/>
</dbReference>
<dbReference type="GO" id="GO:0046872">
    <property type="term" value="F:metal ion binding"/>
    <property type="evidence" value="ECO:0007669"/>
    <property type="project" value="UniProtKB-KW"/>
</dbReference>
<dbReference type="GO" id="GO:0042803">
    <property type="term" value="F:protein homodimerization activity"/>
    <property type="evidence" value="ECO:0000250"/>
    <property type="project" value="UniProtKB"/>
</dbReference>
<dbReference type="GO" id="GO:0006782">
    <property type="term" value="P:protoporphyrinogen IX biosynthetic process"/>
    <property type="evidence" value="ECO:0007669"/>
    <property type="project" value="UniProtKB-UniRule"/>
</dbReference>
<dbReference type="FunFam" id="3.40.1500.10:FF:000001">
    <property type="entry name" value="Oxygen-dependent coproporphyrinogen-III oxidase"/>
    <property type="match status" value="1"/>
</dbReference>
<dbReference type="Gene3D" id="3.40.1500.10">
    <property type="entry name" value="Coproporphyrinogen III oxidase, aerobic"/>
    <property type="match status" value="1"/>
</dbReference>
<dbReference type="HAMAP" id="MF_00333">
    <property type="entry name" value="Coprogen_oxidas"/>
    <property type="match status" value="1"/>
</dbReference>
<dbReference type="InterPro" id="IPR001260">
    <property type="entry name" value="Coprogen_oxidase_aer"/>
</dbReference>
<dbReference type="InterPro" id="IPR036406">
    <property type="entry name" value="Coprogen_oxidase_aer_sf"/>
</dbReference>
<dbReference type="InterPro" id="IPR018375">
    <property type="entry name" value="Coprogen_oxidase_CS"/>
</dbReference>
<dbReference type="NCBIfam" id="NF003727">
    <property type="entry name" value="PRK05330.1"/>
    <property type="match status" value="1"/>
</dbReference>
<dbReference type="PANTHER" id="PTHR10755">
    <property type="entry name" value="COPROPORPHYRINOGEN III OXIDASE, MITOCHONDRIAL"/>
    <property type="match status" value="1"/>
</dbReference>
<dbReference type="PANTHER" id="PTHR10755:SF0">
    <property type="entry name" value="OXYGEN-DEPENDENT COPROPORPHYRINOGEN-III OXIDASE, MITOCHONDRIAL"/>
    <property type="match status" value="1"/>
</dbReference>
<dbReference type="Pfam" id="PF01218">
    <property type="entry name" value="Coprogen_oxidas"/>
    <property type="match status" value="1"/>
</dbReference>
<dbReference type="PIRSF" id="PIRSF000166">
    <property type="entry name" value="Coproporphyri_ox"/>
    <property type="match status" value="1"/>
</dbReference>
<dbReference type="PRINTS" id="PR00073">
    <property type="entry name" value="COPRGNOXDASE"/>
</dbReference>
<dbReference type="SUPFAM" id="SSF102886">
    <property type="entry name" value="Coproporphyrinogen III oxidase"/>
    <property type="match status" value="1"/>
</dbReference>
<dbReference type="PROSITE" id="PS01021">
    <property type="entry name" value="COPROGEN_OXIDASE"/>
    <property type="match status" value="1"/>
</dbReference>
<keyword id="KW-0963">Cytoplasm</keyword>
<keyword id="KW-0350">Heme biosynthesis</keyword>
<keyword id="KW-0479">Metal-binding</keyword>
<keyword id="KW-0560">Oxidoreductase</keyword>
<keyword id="KW-0627">Porphyrin biosynthesis</keyword>